<accession>Q5SSH8</accession>
<accession>A0AUN6</accession>
<accession>Q0VGS6</accession>
<accession>Q8BHV3</accession>
<feature type="signal peptide" evidence="2">
    <location>
        <begin position="1"/>
        <end position="22"/>
    </location>
</feature>
<feature type="chain" id="PRO_0000312322" description="Neuferricin">
    <location>
        <begin position="23"/>
        <end position="263"/>
    </location>
</feature>
<feature type="domain" description="Cytochrome b5 heme-binding">
    <location>
        <begin position="35"/>
        <end position="134"/>
    </location>
</feature>
<feature type="region of interest" description="Disordered" evidence="3">
    <location>
        <begin position="220"/>
        <end position="249"/>
    </location>
</feature>
<feature type="compositionally biased region" description="Basic and acidic residues" evidence="3">
    <location>
        <begin position="231"/>
        <end position="241"/>
    </location>
</feature>
<feature type="splice variant" id="VSP_029827" description="In isoform 2." evidence="5">
    <location>
        <begin position="1"/>
        <end position="153"/>
    </location>
</feature>
<feature type="sequence conflict" description="In Ref. 2; AAH86682." evidence="6" ref="2">
    <original>G</original>
    <variation>V</variation>
    <location>
        <position position="76"/>
    </location>
</feature>
<protein>
    <recommendedName>
        <fullName>Neuferricin</fullName>
    </recommendedName>
    <alternativeName>
        <fullName>Cytochrome b5 domain-containing protein 2</fullName>
    </alternativeName>
</protein>
<gene>
    <name evidence="7" type="primary">Cyb5d2</name>
</gene>
<name>NEUFC_MOUSE</name>
<reference key="1">
    <citation type="journal article" date="2009" name="PLoS Biol.">
        <title>Lineage-specific biology revealed by a finished genome assembly of the mouse.</title>
        <authorList>
            <person name="Church D.M."/>
            <person name="Goodstadt L."/>
            <person name="Hillier L.W."/>
            <person name="Zody M.C."/>
            <person name="Goldstein S."/>
            <person name="She X."/>
            <person name="Bult C.J."/>
            <person name="Agarwala R."/>
            <person name="Cherry J.L."/>
            <person name="DiCuccio M."/>
            <person name="Hlavina W."/>
            <person name="Kapustin Y."/>
            <person name="Meric P."/>
            <person name="Maglott D."/>
            <person name="Birtle Z."/>
            <person name="Marques A.C."/>
            <person name="Graves T."/>
            <person name="Zhou S."/>
            <person name="Teague B."/>
            <person name="Potamousis K."/>
            <person name="Churas C."/>
            <person name="Place M."/>
            <person name="Herschleb J."/>
            <person name="Runnheim R."/>
            <person name="Forrest D."/>
            <person name="Amos-Landgraf J."/>
            <person name="Schwartz D.C."/>
            <person name="Cheng Z."/>
            <person name="Lindblad-Toh K."/>
            <person name="Eichler E.E."/>
            <person name="Ponting C.P."/>
        </authorList>
    </citation>
    <scope>NUCLEOTIDE SEQUENCE [LARGE SCALE GENOMIC DNA]</scope>
    <source>
        <strain>C57BL/6J</strain>
    </source>
</reference>
<reference key="2">
    <citation type="journal article" date="2004" name="Genome Res.">
        <title>The status, quality, and expansion of the NIH full-length cDNA project: the Mammalian Gene Collection (MGC).</title>
        <authorList>
            <consortium name="The MGC Project Team"/>
        </authorList>
    </citation>
    <scope>NUCLEOTIDE SEQUENCE [LARGE SCALE MRNA] (ISOFORMS 1 AND 2)</scope>
    <source>
        <strain>C57BL/6J</strain>
        <tissue>Eye</tissue>
    </source>
</reference>
<reference key="3">
    <citation type="journal article" date="2005" name="Science">
        <title>The transcriptional landscape of the mammalian genome.</title>
        <authorList>
            <person name="Carninci P."/>
            <person name="Kasukawa T."/>
            <person name="Katayama S."/>
            <person name="Gough J."/>
            <person name="Frith M.C."/>
            <person name="Maeda N."/>
            <person name="Oyama R."/>
            <person name="Ravasi T."/>
            <person name="Lenhard B."/>
            <person name="Wells C."/>
            <person name="Kodzius R."/>
            <person name="Shimokawa K."/>
            <person name="Bajic V.B."/>
            <person name="Brenner S.E."/>
            <person name="Batalov S."/>
            <person name="Forrest A.R."/>
            <person name="Zavolan M."/>
            <person name="Davis M.J."/>
            <person name="Wilming L.G."/>
            <person name="Aidinis V."/>
            <person name="Allen J.E."/>
            <person name="Ambesi-Impiombato A."/>
            <person name="Apweiler R."/>
            <person name="Aturaliya R.N."/>
            <person name="Bailey T.L."/>
            <person name="Bansal M."/>
            <person name="Baxter L."/>
            <person name="Beisel K.W."/>
            <person name="Bersano T."/>
            <person name="Bono H."/>
            <person name="Chalk A.M."/>
            <person name="Chiu K.P."/>
            <person name="Choudhary V."/>
            <person name="Christoffels A."/>
            <person name="Clutterbuck D.R."/>
            <person name="Crowe M.L."/>
            <person name="Dalla E."/>
            <person name="Dalrymple B.P."/>
            <person name="de Bono B."/>
            <person name="Della Gatta G."/>
            <person name="di Bernardo D."/>
            <person name="Down T."/>
            <person name="Engstrom P."/>
            <person name="Fagiolini M."/>
            <person name="Faulkner G."/>
            <person name="Fletcher C.F."/>
            <person name="Fukushima T."/>
            <person name="Furuno M."/>
            <person name="Futaki S."/>
            <person name="Gariboldi M."/>
            <person name="Georgii-Hemming P."/>
            <person name="Gingeras T.R."/>
            <person name="Gojobori T."/>
            <person name="Green R.E."/>
            <person name="Gustincich S."/>
            <person name="Harbers M."/>
            <person name="Hayashi Y."/>
            <person name="Hensch T.K."/>
            <person name="Hirokawa N."/>
            <person name="Hill D."/>
            <person name="Huminiecki L."/>
            <person name="Iacono M."/>
            <person name="Ikeo K."/>
            <person name="Iwama A."/>
            <person name="Ishikawa T."/>
            <person name="Jakt M."/>
            <person name="Kanapin A."/>
            <person name="Katoh M."/>
            <person name="Kawasawa Y."/>
            <person name="Kelso J."/>
            <person name="Kitamura H."/>
            <person name="Kitano H."/>
            <person name="Kollias G."/>
            <person name="Krishnan S.P."/>
            <person name="Kruger A."/>
            <person name="Kummerfeld S.K."/>
            <person name="Kurochkin I.V."/>
            <person name="Lareau L.F."/>
            <person name="Lazarevic D."/>
            <person name="Lipovich L."/>
            <person name="Liu J."/>
            <person name="Liuni S."/>
            <person name="McWilliam S."/>
            <person name="Madan Babu M."/>
            <person name="Madera M."/>
            <person name="Marchionni L."/>
            <person name="Matsuda H."/>
            <person name="Matsuzawa S."/>
            <person name="Miki H."/>
            <person name="Mignone F."/>
            <person name="Miyake S."/>
            <person name="Morris K."/>
            <person name="Mottagui-Tabar S."/>
            <person name="Mulder N."/>
            <person name="Nakano N."/>
            <person name="Nakauchi H."/>
            <person name="Ng P."/>
            <person name="Nilsson R."/>
            <person name="Nishiguchi S."/>
            <person name="Nishikawa S."/>
            <person name="Nori F."/>
            <person name="Ohara O."/>
            <person name="Okazaki Y."/>
            <person name="Orlando V."/>
            <person name="Pang K.C."/>
            <person name="Pavan W.J."/>
            <person name="Pavesi G."/>
            <person name="Pesole G."/>
            <person name="Petrovsky N."/>
            <person name="Piazza S."/>
            <person name="Reed J."/>
            <person name="Reid J.F."/>
            <person name="Ring B.Z."/>
            <person name="Ringwald M."/>
            <person name="Rost B."/>
            <person name="Ruan Y."/>
            <person name="Salzberg S.L."/>
            <person name="Sandelin A."/>
            <person name="Schneider C."/>
            <person name="Schoenbach C."/>
            <person name="Sekiguchi K."/>
            <person name="Semple C.A."/>
            <person name="Seno S."/>
            <person name="Sessa L."/>
            <person name="Sheng Y."/>
            <person name="Shibata Y."/>
            <person name="Shimada H."/>
            <person name="Shimada K."/>
            <person name="Silva D."/>
            <person name="Sinclair B."/>
            <person name="Sperling S."/>
            <person name="Stupka E."/>
            <person name="Sugiura K."/>
            <person name="Sultana R."/>
            <person name="Takenaka Y."/>
            <person name="Taki K."/>
            <person name="Tammoja K."/>
            <person name="Tan S.L."/>
            <person name="Tang S."/>
            <person name="Taylor M.S."/>
            <person name="Tegner J."/>
            <person name="Teichmann S.A."/>
            <person name="Ueda H.R."/>
            <person name="van Nimwegen E."/>
            <person name="Verardo R."/>
            <person name="Wei C.L."/>
            <person name="Yagi K."/>
            <person name="Yamanishi H."/>
            <person name="Zabarovsky E."/>
            <person name="Zhu S."/>
            <person name="Zimmer A."/>
            <person name="Hide W."/>
            <person name="Bult C."/>
            <person name="Grimmond S.M."/>
            <person name="Teasdale R.D."/>
            <person name="Liu E.T."/>
            <person name="Brusic V."/>
            <person name="Quackenbush J."/>
            <person name="Wahlestedt C."/>
            <person name="Mattick J.S."/>
            <person name="Hume D.A."/>
            <person name="Kai C."/>
            <person name="Sasaki D."/>
            <person name="Tomaru Y."/>
            <person name="Fukuda S."/>
            <person name="Kanamori-Katayama M."/>
            <person name="Suzuki M."/>
            <person name="Aoki J."/>
            <person name="Arakawa T."/>
            <person name="Iida J."/>
            <person name="Imamura K."/>
            <person name="Itoh M."/>
            <person name="Kato T."/>
            <person name="Kawaji H."/>
            <person name="Kawagashira N."/>
            <person name="Kawashima T."/>
            <person name="Kojima M."/>
            <person name="Kondo S."/>
            <person name="Konno H."/>
            <person name="Nakano K."/>
            <person name="Ninomiya N."/>
            <person name="Nishio T."/>
            <person name="Okada M."/>
            <person name="Plessy C."/>
            <person name="Shibata K."/>
            <person name="Shiraki T."/>
            <person name="Suzuki S."/>
            <person name="Tagami M."/>
            <person name="Waki K."/>
            <person name="Watahiki A."/>
            <person name="Okamura-Oho Y."/>
            <person name="Suzuki H."/>
            <person name="Kawai J."/>
            <person name="Hayashizaki Y."/>
        </authorList>
    </citation>
    <scope>NUCLEOTIDE SEQUENCE [LARGE SCALE MRNA] OF 1-84 (ISOFORM 1)</scope>
    <source>
        <strain>C57BL/6J</strain>
        <tissue>Blood vessel</tissue>
        <tissue>Kidney</tissue>
        <tissue>Retina</tissue>
    </source>
</reference>
<reference key="4">
    <citation type="journal article" date="2010" name="J. Neurochem.">
        <title>Neuferricin, a novel extracellular heme-binding protein, promotes neurogenesis.</title>
        <authorList>
            <person name="Kimura I."/>
            <person name="Nakayama Y."/>
            <person name="Konishi M."/>
            <person name="Kobayashi T."/>
            <person name="Mori M."/>
            <person name="Ito M."/>
            <person name="Hirasawa A."/>
            <person name="Tsujimoto G."/>
            <person name="Ohta M."/>
            <person name="Itoh N."/>
            <person name="Fujimoto M."/>
        </authorList>
    </citation>
    <scope>HEME-BINDING</scope>
    <scope>TISSUE SPECIFICITY</scope>
    <scope>DEVELOPMENTAL STAGE</scope>
    <scope>SUBCELLULAR LOCATION</scope>
    <scope>FUNCTION</scope>
</reference>
<dbReference type="EMBL" id="AL663082">
    <property type="status" value="NOT_ANNOTATED_CDS"/>
    <property type="molecule type" value="Genomic_DNA"/>
</dbReference>
<dbReference type="EMBL" id="BC086682">
    <property type="protein sequence ID" value="AAH86682.1"/>
    <property type="molecule type" value="mRNA"/>
</dbReference>
<dbReference type="EMBL" id="BC117721">
    <property type="protein sequence ID" value="AAI17722.2"/>
    <property type="molecule type" value="mRNA"/>
</dbReference>
<dbReference type="EMBL" id="AK080730">
    <property type="protein sequence ID" value="BAC37998.1"/>
    <property type="status" value="ALT_SEQ"/>
    <property type="molecule type" value="mRNA"/>
</dbReference>
<dbReference type="EMBL" id="AK138991">
    <property type="protein sequence ID" value="BAE23849.1"/>
    <property type="status" value="ALT_SEQ"/>
    <property type="molecule type" value="mRNA"/>
</dbReference>
<dbReference type="EMBL" id="AK142515">
    <property type="protein sequence ID" value="BAE25095.1"/>
    <property type="status" value="ALT_SEQ"/>
    <property type="molecule type" value="mRNA"/>
</dbReference>
<dbReference type="CCDS" id="CCDS24990.2">
    <molecule id="Q5SSH8-1"/>
</dbReference>
<dbReference type="RefSeq" id="NP_001020097.2">
    <molecule id="Q5SSH8-1"/>
    <property type="nucleotide sequence ID" value="NM_001024926.3"/>
</dbReference>
<dbReference type="SMR" id="Q5SSH8"/>
<dbReference type="FunCoup" id="Q5SSH8">
    <property type="interactions" value="1453"/>
</dbReference>
<dbReference type="STRING" id="10090.ENSMUSP00000078623"/>
<dbReference type="PhosphoSitePlus" id="Q5SSH8"/>
<dbReference type="SwissPalm" id="Q5SSH8"/>
<dbReference type="PaxDb" id="10090-ENSMUSP00000078623"/>
<dbReference type="PeptideAtlas" id="Q5SSH8"/>
<dbReference type="ProteomicsDB" id="287481">
    <molecule id="Q5SSH8-1"/>
</dbReference>
<dbReference type="ProteomicsDB" id="287482">
    <molecule id="Q5SSH8-2"/>
</dbReference>
<dbReference type="Antibodypedia" id="23235">
    <property type="antibodies" value="74 antibodies from 14 providers"/>
</dbReference>
<dbReference type="DNASU" id="192986"/>
<dbReference type="Ensembl" id="ENSMUST00000079681.6">
    <molecule id="Q5SSH8-1"/>
    <property type="protein sequence ID" value="ENSMUSP00000078623.6"/>
    <property type="gene ID" value="ENSMUSG00000057778.15"/>
</dbReference>
<dbReference type="Ensembl" id="ENSMUST00000156294.8">
    <molecule id="Q5SSH8-2"/>
    <property type="protein sequence ID" value="ENSMUSP00000131961.2"/>
    <property type="gene ID" value="ENSMUSG00000057778.15"/>
</dbReference>
<dbReference type="GeneID" id="192986"/>
<dbReference type="KEGG" id="mmu:192986"/>
<dbReference type="UCSC" id="uc007jzi.2">
    <molecule id="Q5SSH8-1"/>
    <property type="organism name" value="mouse"/>
</dbReference>
<dbReference type="UCSC" id="uc007jzj.2">
    <molecule id="Q5SSH8-2"/>
    <property type="organism name" value="mouse"/>
</dbReference>
<dbReference type="AGR" id="MGI:2684848"/>
<dbReference type="CTD" id="124936"/>
<dbReference type="MGI" id="MGI:2684848">
    <property type="gene designation" value="Cyb5d2"/>
</dbReference>
<dbReference type="VEuPathDB" id="HostDB:ENSMUSG00000057778"/>
<dbReference type="eggNOG" id="KOG1108">
    <property type="taxonomic scope" value="Eukaryota"/>
</dbReference>
<dbReference type="GeneTree" id="ENSGT00940000160156"/>
<dbReference type="HOGENOM" id="CLU_065455_2_0_1"/>
<dbReference type="InParanoid" id="Q5SSH8"/>
<dbReference type="OMA" id="GHKHYGP"/>
<dbReference type="OrthoDB" id="10257697at2759"/>
<dbReference type="PhylomeDB" id="Q5SSH8"/>
<dbReference type="TreeFam" id="TF313943"/>
<dbReference type="BioGRID-ORCS" id="192986">
    <property type="hits" value="3 hits in 77 CRISPR screens"/>
</dbReference>
<dbReference type="ChiTaRS" id="Cyb5d2">
    <property type="organism name" value="mouse"/>
</dbReference>
<dbReference type="PRO" id="PR:Q5SSH8"/>
<dbReference type="Proteomes" id="UP000000589">
    <property type="component" value="Chromosome 11"/>
</dbReference>
<dbReference type="RNAct" id="Q5SSH8">
    <property type="molecule type" value="protein"/>
</dbReference>
<dbReference type="Bgee" id="ENSMUSG00000057778">
    <property type="expression patterns" value="Expressed in hindlimb stylopod muscle and 185 other cell types or tissues"/>
</dbReference>
<dbReference type="GO" id="GO:0005576">
    <property type="term" value="C:extracellular region"/>
    <property type="evidence" value="ECO:0000314"/>
    <property type="project" value="MGI"/>
</dbReference>
<dbReference type="GO" id="GO:0020037">
    <property type="term" value="F:heme binding"/>
    <property type="evidence" value="ECO:0000314"/>
    <property type="project" value="MGI"/>
</dbReference>
<dbReference type="GO" id="GO:0030182">
    <property type="term" value="P:neuron differentiation"/>
    <property type="evidence" value="ECO:0000315"/>
    <property type="project" value="MGI"/>
</dbReference>
<dbReference type="GO" id="GO:0045666">
    <property type="term" value="P:positive regulation of neuron differentiation"/>
    <property type="evidence" value="ECO:0000315"/>
    <property type="project" value="MGI"/>
</dbReference>
<dbReference type="Gene3D" id="3.10.120.10">
    <property type="entry name" value="Cytochrome b5-like heme/steroid binding domain"/>
    <property type="match status" value="1"/>
</dbReference>
<dbReference type="InterPro" id="IPR001199">
    <property type="entry name" value="Cyt_B5-like_heme/steroid-bd"/>
</dbReference>
<dbReference type="InterPro" id="IPR036400">
    <property type="entry name" value="Cyt_B5-like_heme/steroid_sf"/>
</dbReference>
<dbReference type="InterPro" id="IPR050577">
    <property type="entry name" value="MAPR/NEUFC/NENF-like"/>
</dbReference>
<dbReference type="PANTHER" id="PTHR10281">
    <property type="entry name" value="MEMBRANE-ASSOCIATED PROGESTERONE RECEPTOR COMPONENT-RELATED"/>
    <property type="match status" value="1"/>
</dbReference>
<dbReference type="PANTHER" id="PTHR10281:SF4">
    <property type="entry name" value="NEUFERRICIN"/>
    <property type="match status" value="1"/>
</dbReference>
<dbReference type="Pfam" id="PF00173">
    <property type="entry name" value="Cyt-b5"/>
    <property type="match status" value="1"/>
</dbReference>
<dbReference type="SMART" id="SM01117">
    <property type="entry name" value="Cyt-b5"/>
    <property type="match status" value="1"/>
</dbReference>
<dbReference type="SUPFAM" id="SSF55856">
    <property type="entry name" value="Cytochrome b5-like heme/steroid binding domain"/>
    <property type="match status" value="1"/>
</dbReference>
<evidence type="ECO:0000250" key="1">
    <source>
        <dbReference type="UniProtKB" id="Q8WUJ1"/>
    </source>
</evidence>
<evidence type="ECO:0000255" key="2"/>
<evidence type="ECO:0000256" key="3">
    <source>
        <dbReference type="SAM" id="MobiDB-lite"/>
    </source>
</evidence>
<evidence type="ECO:0000269" key="4">
    <source>
    </source>
</evidence>
<evidence type="ECO:0000303" key="5">
    <source>
    </source>
</evidence>
<evidence type="ECO:0000305" key="6"/>
<evidence type="ECO:0000312" key="7">
    <source>
        <dbReference type="MGI" id="MGI:2684848"/>
    </source>
</evidence>
<sequence>MLRICGLGVVLSLAVAAVAVMAVWLMDWWGPRPGIRLFLPEELARYRGGPGDPGLYLALLGRVYDVSSGRRHYEPGAHYSGFAGRDASRAFVTGDYSEAGLVDDINGLSSSEILTLHNWLSFYEKNYVFVGRLVGRFYRKDGLPTSELTQVEAMVTKGMEANEQEQREKQKFPPCNSEWSSAKGSRLWCSQKSGGVHRDWIGVPRKLYKPGAKEPHCVCVRTTGPPSDQQDNPRHSNHGDLDNPNLEEYTGCPPLATTCSFPL</sequence>
<comment type="function">
    <text evidence="4">Heme-binding protein which promotes neuronal but not astrocyte differentiation.</text>
</comment>
<comment type="subcellular location">
    <subcellularLocation>
        <location evidence="4">Secreted</location>
    </subcellularLocation>
</comment>
<comment type="alternative products">
    <event type="alternative splicing"/>
    <isoform>
        <id>Q5SSH8-1</id>
        <name>1</name>
        <sequence type="displayed"/>
    </isoform>
    <isoform>
        <id>Q5SSH8-2</id>
        <name>2</name>
        <sequence type="described" ref="VSP_029827"/>
    </isoform>
</comment>
<comment type="tissue specificity">
    <text evidence="4">Expressed in various tissues including brain, heart, adrenal gland, and kidney. In the brain, mainly expressed in pyramidal cells around the CA3 region of Ammon horn in hippocampus. Present in brain (at protein level).</text>
</comment>
<comment type="developmental stage">
    <text evidence="4">Abundantly expressed in the developing brain, in subventricular and ventricular zones of the cerebrum, where neural stem cells and neural precursor cells primarily exist. Expression levels gradually increase during brain development, between 14.5 dpc and P49.</text>
</comment>
<comment type="domain">
    <text>The cytochrome b5 heme-binding domain was proven to bind heme, although it lacks the conserved iron-binding His residues at position 73 and 106.</text>
</comment>
<comment type="miscellaneous">
    <text evidence="1">Non-classical progesterone receptors involved in extranuclear signaling are classified in 2 groups: the class II progestin and adipoQ receptor (PAQR) family (also called mPRs) (PAQR5, PAQR6, PAQR7, PAQR8 and PAQR9) and the b5-like heme/steroid-binding protein family (also called MAPRs) (PGRMC1, PGRMC2, NENF and CYB5D2).</text>
</comment>
<comment type="similarity">
    <text evidence="6">Belongs to the cytochrome b5 family. MAPR subfamily.</text>
</comment>
<comment type="sequence caution" evidence="6">
    <conflict type="miscellaneous discrepancy">
        <sequence resource="EMBL-CDS" id="BAC37998"/>
    </conflict>
    <text>Probable cloning artifact.</text>
</comment>
<comment type="sequence caution" evidence="6">
    <conflict type="miscellaneous discrepancy">
        <sequence resource="EMBL-CDS" id="BAE23849"/>
    </conflict>
    <text>Probable cloning artifact.</text>
</comment>
<comment type="sequence caution" evidence="6">
    <conflict type="miscellaneous discrepancy">
        <sequence resource="EMBL-CDS" id="BAE25095"/>
    </conflict>
    <text>Probable cloning artifact.</text>
</comment>
<keyword id="KW-0025">Alternative splicing</keyword>
<keyword id="KW-0524">Neurogenesis</keyword>
<keyword id="KW-1185">Reference proteome</keyword>
<keyword id="KW-0964">Secreted</keyword>
<keyword id="KW-0732">Signal</keyword>
<proteinExistence type="evidence at protein level"/>
<organism>
    <name type="scientific">Mus musculus</name>
    <name type="common">Mouse</name>
    <dbReference type="NCBI Taxonomy" id="10090"/>
    <lineage>
        <taxon>Eukaryota</taxon>
        <taxon>Metazoa</taxon>
        <taxon>Chordata</taxon>
        <taxon>Craniata</taxon>
        <taxon>Vertebrata</taxon>
        <taxon>Euteleostomi</taxon>
        <taxon>Mammalia</taxon>
        <taxon>Eutheria</taxon>
        <taxon>Euarchontoglires</taxon>
        <taxon>Glires</taxon>
        <taxon>Rodentia</taxon>
        <taxon>Myomorpha</taxon>
        <taxon>Muroidea</taxon>
        <taxon>Muridae</taxon>
        <taxon>Murinae</taxon>
        <taxon>Mus</taxon>
        <taxon>Mus</taxon>
    </lineage>
</organism>